<reference key="1">
    <citation type="journal article" date="2009" name="BMC Genomics">
        <title>Complete genome sequence of the sugarcane nitrogen-fixing endophyte Gluconacetobacter diazotrophicus Pal5.</title>
        <authorList>
            <person name="Bertalan M."/>
            <person name="Albano R."/>
            <person name="de Padua V."/>
            <person name="Rouws L."/>
            <person name="Rojas C."/>
            <person name="Hemerly A."/>
            <person name="Teixeira K."/>
            <person name="Schwab S."/>
            <person name="Araujo J."/>
            <person name="Oliveira A."/>
            <person name="Franca L."/>
            <person name="Magalhaes V."/>
            <person name="Alqueres S."/>
            <person name="Cardoso A."/>
            <person name="Almeida W."/>
            <person name="Loureiro M.M."/>
            <person name="Nogueira E."/>
            <person name="Cidade D."/>
            <person name="Oliveira D."/>
            <person name="Simao T."/>
            <person name="Macedo J."/>
            <person name="Valadao A."/>
            <person name="Dreschsel M."/>
            <person name="Freitas F."/>
            <person name="Vidal M."/>
            <person name="Guedes H."/>
            <person name="Rodrigues E."/>
            <person name="Meneses C."/>
            <person name="Brioso P."/>
            <person name="Pozzer L."/>
            <person name="Figueiredo D."/>
            <person name="Montano H."/>
            <person name="Junior J."/>
            <person name="de Souza Filho G."/>
            <person name="Martin Quintana Flores V."/>
            <person name="Ferreira B."/>
            <person name="Branco A."/>
            <person name="Gonzalez P."/>
            <person name="Guillobel H."/>
            <person name="Lemos M."/>
            <person name="Seibel L."/>
            <person name="Macedo J."/>
            <person name="Alves-Ferreira M."/>
            <person name="Sachetto-Martins G."/>
            <person name="Coelho A."/>
            <person name="Santos E."/>
            <person name="Amaral G."/>
            <person name="Neves A."/>
            <person name="Pacheco A.B."/>
            <person name="Carvalho D."/>
            <person name="Lery L."/>
            <person name="Bisch P."/>
            <person name="Rossle S.C."/>
            <person name="Urmenyi T."/>
            <person name="Rael Pereira A."/>
            <person name="Silva R."/>
            <person name="Rondinelli E."/>
            <person name="von Kruger W."/>
            <person name="Martins O."/>
            <person name="Baldani J.I."/>
            <person name="Ferreira P.C."/>
        </authorList>
    </citation>
    <scope>NUCLEOTIDE SEQUENCE [LARGE SCALE GENOMIC DNA]</scope>
    <source>
        <strain>ATCC 49037 / DSM 5601 / CCUG 37298 / CIP 103539 / LMG 7603 / PAl5</strain>
    </source>
</reference>
<reference key="2">
    <citation type="journal article" date="2010" name="Stand. Genomic Sci.">
        <title>Two genome sequences of the same bacterial strain, Gluconacetobacter diazotrophicus PAl 5, suggest a new standard in genome sequence submission.</title>
        <authorList>
            <person name="Giongo A."/>
            <person name="Tyler H.L."/>
            <person name="Zipperer U.N."/>
            <person name="Triplett E.W."/>
        </authorList>
    </citation>
    <scope>NUCLEOTIDE SEQUENCE [LARGE SCALE GENOMIC DNA]</scope>
    <source>
        <strain>ATCC 49037 / DSM 5601 / CCUG 37298 / CIP 103539 / LMG 7603 / PAl5</strain>
    </source>
</reference>
<evidence type="ECO:0000255" key="1">
    <source>
        <dbReference type="HAMAP-Rule" id="MF_01337"/>
    </source>
</evidence>
<evidence type="ECO:0000305" key="2"/>
<sequence>MSTQQDLRERRRQRLRFQLRRKGGGRPRLSVFRSGKNIYAQVIDDVAGRTLAAASSLDKALREQLKTGADSDAAVAVGKLVAERAVAAGVSLVVFDRGSYMYHGRIKALAEAAREGGLAF</sequence>
<name>RL18_GLUDA</name>
<gene>
    <name evidence="1" type="primary">rplR</name>
    <name type="ordered locus">GDI3388</name>
    <name type="ordered locus">Gdia_2982</name>
</gene>
<proteinExistence type="inferred from homology"/>
<feature type="chain" id="PRO_1000086667" description="Large ribosomal subunit protein uL18">
    <location>
        <begin position="1"/>
        <end position="120"/>
    </location>
</feature>
<protein>
    <recommendedName>
        <fullName evidence="1">Large ribosomal subunit protein uL18</fullName>
    </recommendedName>
    <alternativeName>
        <fullName evidence="2">50S ribosomal protein L18</fullName>
    </alternativeName>
</protein>
<organism>
    <name type="scientific">Gluconacetobacter diazotrophicus (strain ATCC 49037 / DSM 5601 / CCUG 37298 / CIP 103539 / LMG 7603 / PAl5)</name>
    <dbReference type="NCBI Taxonomy" id="272568"/>
    <lineage>
        <taxon>Bacteria</taxon>
        <taxon>Pseudomonadati</taxon>
        <taxon>Pseudomonadota</taxon>
        <taxon>Alphaproteobacteria</taxon>
        <taxon>Acetobacterales</taxon>
        <taxon>Acetobacteraceae</taxon>
        <taxon>Gluconacetobacter</taxon>
    </lineage>
</organism>
<keyword id="KW-1185">Reference proteome</keyword>
<keyword id="KW-0687">Ribonucleoprotein</keyword>
<keyword id="KW-0689">Ribosomal protein</keyword>
<keyword id="KW-0694">RNA-binding</keyword>
<keyword id="KW-0699">rRNA-binding</keyword>
<dbReference type="EMBL" id="AM889285">
    <property type="protein sequence ID" value="CAP57331.1"/>
    <property type="molecule type" value="Genomic_DNA"/>
</dbReference>
<dbReference type="EMBL" id="CP001189">
    <property type="protein sequence ID" value="ACI52712.1"/>
    <property type="molecule type" value="Genomic_DNA"/>
</dbReference>
<dbReference type="RefSeq" id="WP_012227933.1">
    <property type="nucleotide sequence ID" value="NC_010125.1"/>
</dbReference>
<dbReference type="SMR" id="A9H3L5"/>
<dbReference type="STRING" id="272568.GDI3388"/>
<dbReference type="KEGG" id="gdi:GDI3388"/>
<dbReference type="KEGG" id="gdj:Gdia_2982"/>
<dbReference type="eggNOG" id="COG0256">
    <property type="taxonomic scope" value="Bacteria"/>
</dbReference>
<dbReference type="HOGENOM" id="CLU_098841_0_1_5"/>
<dbReference type="OrthoDB" id="9810939at2"/>
<dbReference type="Proteomes" id="UP000001176">
    <property type="component" value="Chromosome"/>
</dbReference>
<dbReference type="GO" id="GO:0022625">
    <property type="term" value="C:cytosolic large ribosomal subunit"/>
    <property type="evidence" value="ECO:0007669"/>
    <property type="project" value="TreeGrafter"/>
</dbReference>
<dbReference type="GO" id="GO:0008097">
    <property type="term" value="F:5S rRNA binding"/>
    <property type="evidence" value="ECO:0007669"/>
    <property type="project" value="TreeGrafter"/>
</dbReference>
<dbReference type="GO" id="GO:0003735">
    <property type="term" value="F:structural constituent of ribosome"/>
    <property type="evidence" value="ECO:0007669"/>
    <property type="project" value="InterPro"/>
</dbReference>
<dbReference type="GO" id="GO:0006412">
    <property type="term" value="P:translation"/>
    <property type="evidence" value="ECO:0007669"/>
    <property type="project" value="UniProtKB-UniRule"/>
</dbReference>
<dbReference type="CDD" id="cd00432">
    <property type="entry name" value="Ribosomal_L18_L5e"/>
    <property type="match status" value="1"/>
</dbReference>
<dbReference type="FunFam" id="3.30.420.100:FF:000001">
    <property type="entry name" value="50S ribosomal protein L18"/>
    <property type="match status" value="1"/>
</dbReference>
<dbReference type="Gene3D" id="3.30.420.100">
    <property type="match status" value="1"/>
</dbReference>
<dbReference type="HAMAP" id="MF_01337_B">
    <property type="entry name" value="Ribosomal_uL18_B"/>
    <property type="match status" value="1"/>
</dbReference>
<dbReference type="InterPro" id="IPR004389">
    <property type="entry name" value="Ribosomal_uL18_bac-type"/>
</dbReference>
<dbReference type="InterPro" id="IPR005484">
    <property type="entry name" value="Ribosomal_uL18_bac/euk"/>
</dbReference>
<dbReference type="NCBIfam" id="TIGR00060">
    <property type="entry name" value="L18_bact"/>
    <property type="match status" value="1"/>
</dbReference>
<dbReference type="PANTHER" id="PTHR12899">
    <property type="entry name" value="39S RIBOSOMAL PROTEIN L18, MITOCHONDRIAL"/>
    <property type="match status" value="1"/>
</dbReference>
<dbReference type="PANTHER" id="PTHR12899:SF3">
    <property type="entry name" value="LARGE RIBOSOMAL SUBUNIT PROTEIN UL18M"/>
    <property type="match status" value="1"/>
</dbReference>
<dbReference type="Pfam" id="PF00861">
    <property type="entry name" value="Ribosomal_L18p"/>
    <property type="match status" value="1"/>
</dbReference>
<dbReference type="SUPFAM" id="SSF53137">
    <property type="entry name" value="Translational machinery components"/>
    <property type="match status" value="1"/>
</dbReference>
<accession>A9H3L5</accession>
<accession>B5ZIH9</accession>
<comment type="function">
    <text evidence="1">This is one of the proteins that bind and probably mediate the attachment of the 5S RNA into the large ribosomal subunit, where it forms part of the central protuberance.</text>
</comment>
<comment type="subunit">
    <text evidence="1">Part of the 50S ribosomal subunit; part of the 5S rRNA/L5/L18/L25 subcomplex. Contacts the 5S and 23S rRNAs.</text>
</comment>
<comment type="similarity">
    <text evidence="1">Belongs to the universal ribosomal protein uL18 family.</text>
</comment>